<name>GLPK_HALSA</name>
<comment type="function">
    <text evidence="1">Key enzyme in the regulation of glycerol uptake and metabolism. Catalyzes the phosphorylation of glycerol to yield sn-glycerol 3-phosphate.</text>
</comment>
<comment type="catalytic activity">
    <reaction evidence="1">
        <text>glycerol + ATP = sn-glycerol 3-phosphate + ADP + H(+)</text>
        <dbReference type="Rhea" id="RHEA:21644"/>
        <dbReference type="ChEBI" id="CHEBI:15378"/>
        <dbReference type="ChEBI" id="CHEBI:17754"/>
        <dbReference type="ChEBI" id="CHEBI:30616"/>
        <dbReference type="ChEBI" id="CHEBI:57597"/>
        <dbReference type="ChEBI" id="CHEBI:456216"/>
        <dbReference type="EC" id="2.7.1.30"/>
    </reaction>
</comment>
<comment type="pathway">
    <text evidence="1">Polyol metabolism; glycerol degradation via glycerol kinase pathway; sn-glycerol 3-phosphate from glycerol: step 1/1.</text>
</comment>
<comment type="similarity">
    <text evidence="1">Belongs to the FGGY kinase family.</text>
</comment>
<reference key="1">
    <citation type="journal article" date="2000" name="Proc. Natl. Acad. Sci. U.S.A.">
        <title>Genome sequence of Halobacterium species NRC-1.</title>
        <authorList>
            <person name="Ng W.V."/>
            <person name="Kennedy S.P."/>
            <person name="Mahairas G.G."/>
            <person name="Berquist B."/>
            <person name="Pan M."/>
            <person name="Shukla H.D."/>
            <person name="Lasky S.R."/>
            <person name="Baliga N.S."/>
            <person name="Thorsson V."/>
            <person name="Sbrogna J."/>
            <person name="Swartzell S."/>
            <person name="Weir D."/>
            <person name="Hall J."/>
            <person name="Dahl T.A."/>
            <person name="Welti R."/>
            <person name="Goo Y.A."/>
            <person name="Leithauser B."/>
            <person name="Keller K."/>
            <person name="Cruz R."/>
            <person name="Danson M.J."/>
            <person name="Hough D.W."/>
            <person name="Maddocks D.G."/>
            <person name="Jablonski P.E."/>
            <person name="Krebs M.P."/>
            <person name="Angevine C.M."/>
            <person name="Dale H."/>
            <person name="Isenbarger T.A."/>
            <person name="Peck R.F."/>
            <person name="Pohlschroder M."/>
            <person name="Spudich J.L."/>
            <person name="Jung K.-H."/>
            <person name="Alam M."/>
            <person name="Freitas T."/>
            <person name="Hou S."/>
            <person name="Daniels C.J."/>
            <person name="Dennis P.P."/>
            <person name="Omer A.D."/>
            <person name="Ebhardt H."/>
            <person name="Lowe T.M."/>
            <person name="Liang P."/>
            <person name="Riley M."/>
            <person name="Hood L."/>
            <person name="DasSarma S."/>
        </authorList>
    </citation>
    <scope>NUCLEOTIDE SEQUENCE [LARGE SCALE GENOMIC DNA]</scope>
    <source>
        <strain>ATCC 700922 / JCM 11081 / NRC-1</strain>
    </source>
</reference>
<accession>Q9HNS5</accession>
<proteinExistence type="inferred from homology"/>
<sequence length="510" mass="55769">MTDAYVGAIDQGTTGTRFIVFDQHGDVVANTYEKHEQHYPEPGWVEHDPLEIWENTKSVVTAGLSAAGLDADDLAAIGITNQRETTVVWDAASGRPIHNALVWQDRRTTSRVESLEENGKIERIREKTGLEADAYFSATKTEWLLDEAEPLKLSSARASSLRDRARDGELLMGTIDSWLIYNLTGEHITDVSNASRTMLYNITDLEWDDWLLEEFDIPREMLPEVRPSSDEAVYGHTDPDGFLGAAVPVTAALGDQQAALFGQTCFDAGDAKNTYGTGSFYLMNTGEDAVSSEHGLLTTIGFQLSGEPVQYALEGSIFVTGAAIEWLEDVDLINNAAQTAELASSVDTTDGVYMVPAFTGLGAPHWDGRARGTLVGMTRGTRKAHIVRATLESIAYQTRDIAAAMEADSGVSTTTLRVDGGAVKNNFLCQLQSDIIQTDLARPEVDETTALGAAYAAGLAVGYWDSLDDLRENWRVDRSFEPEMDPSEADSKYGRWEDAVDRSLAWATED</sequence>
<keyword id="KW-0067">ATP-binding</keyword>
<keyword id="KW-0319">Glycerol metabolism</keyword>
<keyword id="KW-0418">Kinase</keyword>
<keyword id="KW-0547">Nucleotide-binding</keyword>
<keyword id="KW-1185">Reference proteome</keyword>
<keyword id="KW-0808">Transferase</keyword>
<dbReference type="EC" id="2.7.1.30" evidence="1"/>
<dbReference type="EMBL" id="AE004437">
    <property type="protein sequence ID" value="AAG20145.1"/>
    <property type="molecule type" value="Genomic_DNA"/>
</dbReference>
<dbReference type="PIR" id="E84347">
    <property type="entry name" value="E84347"/>
</dbReference>
<dbReference type="RefSeq" id="WP_010903446.1">
    <property type="nucleotide sequence ID" value="NC_002607.1"/>
</dbReference>
<dbReference type="SMR" id="Q9HNS5"/>
<dbReference type="STRING" id="64091.VNG_1967G"/>
<dbReference type="PaxDb" id="64091-VNG_1967G"/>
<dbReference type="GeneID" id="68694569"/>
<dbReference type="KEGG" id="hal:VNG_1967G"/>
<dbReference type="PATRIC" id="fig|64091.14.peg.1504"/>
<dbReference type="HOGENOM" id="CLU_009281_2_3_2"/>
<dbReference type="InParanoid" id="Q9HNS5"/>
<dbReference type="OrthoDB" id="26592at2157"/>
<dbReference type="PhylomeDB" id="Q9HNS5"/>
<dbReference type="UniPathway" id="UPA00618">
    <property type="reaction ID" value="UER00672"/>
</dbReference>
<dbReference type="Proteomes" id="UP000000554">
    <property type="component" value="Chromosome"/>
</dbReference>
<dbReference type="GO" id="GO:0005829">
    <property type="term" value="C:cytosol"/>
    <property type="evidence" value="ECO:0000318"/>
    <property type="project" value="GO_Central"/>
</dbReference>
<dbReference type="GO" id="GO:0005524">
    <property type="term" value="F:ATP binding"/>
    <property type="evidence" value="ECO:0007669"/>
    <property type="project" value="UniProtKB-UniRule"/>
</dbReference>
<dbReference type="GO" id="GO:0004370">
    <property type="term" value="F:glycerol kinase activity"/>
    <property type="evidence" value="ECO:0000250"/>
    <property type="project" value="UniProtKB"/>
</dbReference>
<dbReference type="GO" id="GO:0019563">
    <property type="term" value="P:glycerol catabolic process"/>
    <property type="evidence" value="ECO:0007669"/>
    <property type="project" value="UniProtKB-UniRule"/>
</dbReference>
<dbReference type="GO" id="GO:0006071">
    <property type="term" value="P:glycerol metabolic process"/>
    <property type="evidence" value="ECO:0000250"/>
    <property type="project" value="UniProtKB"/>
</dbReference>
<dbReference type="GO" id="GO:0006072">
    <property type="term" value="P:glycerol-3-phosphate metabolic process"/>
    <property type="evidence" value="ECO:0007669"/>
    <property type="project" value="InterPro"/>
</dbReference>
<dbReference type="CDD" id="cd07769">
    <property type="entry name" value="ASKHA_NBD_FGGY_GK"/>
    <property type="match status" value="1"/>
</dbReference>
<dbReference type="FunFam" id="3.30.420.40:FF:000007">
    <property type="entry name" value="Glycerol kinase"/>
    <property type="match status" value="1"/>
</dbReference>
<dbReference type="FunFam" id="3.30.420.40:FF:000008">
    <property type="entry name" value="Glycerol kinase"/>
    <property type="match status" value="1"/>
</dbReference>
<dbReference type="Gene3D" id="3.30.420.40">
    <property type="match status" value="2"/>
</dbReference>
<dbReference type="HAMAP" id="MF_00186">
    <property type="entry name" value="Glycerol_kin"/>
    <property type="match status" value="1"/>
</dbReference>
<dbReference type="InterPro" id="IPR043129">
    <property type="entry name" value="ATPase_NBD"/>
</dbReference>
<dbReference type="InterPro" id="IPR000577">
    <property type="entry name" value="Carb_kinase_FGGY"/>
</dbReference>
<dbReference type="InterPro" id="IPR018483">
    <property type="entry name" value="Carb_kinase_FGGY_CS"/>
</dbReference>
<dbReference type="InterPro" id="IPR018485">
    <property type="entry name" value="FGGY_C"/>
</dbReference>
<dbReference type="InterPro" id="IPR018484">
    <property type="entry name" value="FGGY_N"/>
</dbReference>
<dbReference type="InterPro" id="IPR005999">
    <property type="entry name" value="Glycerol_kin"/>
</dbReference>
<dbReference type="NCBIfam" id="TIGR01311">
    <property type="entry name" value="glycerol_kin"/>
    <property type="match status" value="1"/>
</dbReference>
<dbReference type="NCBIfam" id="NF000756">
    <property type="entry name" value="PRK00047.1"/>
    <property type="match status" value="1"/>
</dbReference>
<dbReference type="PANTHER" id="PTHR10196:SF69">
    <property type="entry name" value="GLYCEROL KINASE"/>
    <property type="match status" value="1"/>
</dbReference>
<dbReference type="PANTHER" id="PTHR10196">
    <property type="entry name" value="SUGAR KINASE"/>
    <property type="match status" value="1"/>
</dbReference>
<dbReference type="Pfam" id="PF02782">
    <property type="entry name" value="FGGY_C"/>
    <property type="match status" value="1"/>
</dbReference>
<dbReference type="Pfam" id="PF00370">
    <property type="entry name" value="FGGY_N"/>
    <property type="match status" value="1"/>
</dbReference>
<dbReference type="PIRSF" id="PIRSF000538">
    <property type="entry name" value="GlpK"/>
    <property type="match status" value="1"/>
</dbReference>
<dbReference type="SUPFAM" id="SSF53067">
    <property type="entry name" value="Actin-like ATPase domain"/>
    <property type="match status" value="2"/>
</dbReference>
<dbReference type="PROSITE" id="PS00445">
    <property type="entry name" value="FGGY_KINASES_2"/>
    <property type="match status" value="1"/>
</dbReference>
<feature type="chain" id="PRO_0000059527" description="Glycerol kinase">
    <location>
        <begin position="1"/>
        <end position="510"/>
    </location>
</feature>
<feature type="binding site" evidence="1">
    <location>
        <position position="13"/>
    </location>
    <ligand>
        <name>ADP</name>
        <dbReference type="ChEBI" id="CHEBI:456216"/>
    </ligand>
</feature>
<feature type="binding site" evidence="1">
    <location>
        <position position="13"/>
    </location>
    <ligand>
        <name>ATP</name>
        <dbReference type="ChEBI" id="CHEBI:30616"/>
    </ligand>
</feature>
<feature type="binding site" evidence="1">
    <location>
        <position position="13"/>
    </location>
    <ligand>
        <name>sn-glycerol 3-phosphate</name>
        <dbReference type="ChEBI" id="CHEBI:57597"/>
    </ligand>
</feature>
<feature type="binding site" evidence="1">
    <location>
        <position position="14"/>
    </location>
    <ligand>
        <name>ATP</name>
        <dbReference type="ChEBI" id="CHEBI:30616"/>
    </ligand>
</feature>
<feature type="binding site" evidence="1">
    <location>
        <position position="17"/>
    </location>
    <ligand>
        <name>ADP</name>
        <dbReference type="ChEBI" id="CHEBI:456216"/>
    </ligand>
</feature>
<feature type="binding site" evidence="1">
    <location>
        <position position="83"/>
    </location>
    <ligand>
        <name>glycerol</name>
        <dbReference type="ChEBI" id="CHEBI:17754"/>
    </ligand>
</feature>
<feature type="binding site" evidence="1">
    <location>
        <position position="83"/>
    </location>
    <ligand>
        <name>sn-glycerol 3-phosphate</name>
        <dbReference type="ChEBI" id="CHEBI:57597"/>
    </ligand>
</feature>
<feature type="binding site" evidence="1">
    <location>
        <position position="84"/>
    </location>
    <ligand>
        <name>glycerol</name>
        <dbReference type="ChEBI" id="CHEBI:17754"/>
    </ligand>
</feature>
<feature type="binding site" evidence="1">
    <location>
        <position position="84"/>
    </location>
    <ligand>
        <name>sn-glycerol 3-phosphate</name>
        <dbReference type="ChEBI" id="CHEBI:57597"/>
    </ligand>
</feature>
<feature type="binding site" evidence="1">
    <location>
        <position position="135"/>
    </location>
    <ligand>
        <name>glycerol</name>
        <dbReference type="ChEBI" id="CHEBI:17754"/>
    </ligand>
</feature>
<feature type="binding site" evidence="1">
    <location>
        <position position="135"/>
    </location>
    <ligand>
        <name>sn-glycerol 3-phosphate</name>
        <dbReference type="ChEBI" id="CHEBI:57597"/>
    </ligand>
</feature>
<feature type="binding site" evidence="1">
    <location>
        <position position="255"/>
    </location>
    <ligand>
        <name>glycerol</name>
        <dbReference type="ChEBI" id="CHEBI:17754"/>
    </ligand>
</feature>
<feature type="binding site" evidence="1">
    <location>
        <position position="255"/>
    </location>
    <ligand>
        <name>sn-glycerol 3-phosphate</name>
        <dbReference type="ChEBI" id="CHEBI:57597"/>
    </ligand>
</feature>
<feature type="binding site" evidence="1">
    <location>
        <position position="256"/>
    </location>
    <ligand>
        <name>glycerol</name>
        <dbReference type="ChEBI" id="CHEBI:17754"/>
    </ligand>
</feature>
<feature type="binding site" evidence="1">
    <location>
        <position position="277"/>
    </location>
    <ligand>
        <name>ADP</name>
        <dbReference type="ChEBI" id="CHEBI:456216"/>
    </ligand>
</feature>
<feature type="binding site" evidence="1">
    <location>
        <position position="277"/>
    </location>
    <ligand>
        <name>ATP</name>
        <dbReference type="ChEBI" id="CHEBI:30616"/>
    </ligand>
</feature>
<feature type="binding site" evidence="1">
    <location>
        <position position="321"/>
    </location>
    <ligand>
        <name>ADP</name>
        <dbReference type="ChEBI" id="CHEBI:456216"/>
    </ligand>
</feature>
<feature type="binding site" evidence="1">
    <location>
        <position position="321"/>
    </location>
    <ligand>
        <name>ATP</name>
        <dbReference type="ChEBI" id="CHEBI:30616"/>
    </ligand>
</feature>
<feature type="binding site" evidence="1">
    <location>
        <position position="421"/>
    </location>
    <ligand>
        <name>ADP</name>
        <dbReference type="ChEBI" id="CHEBI:456216"/>
    </ligand>
</feature>
<feature type="binding site" evidence="1">
    <location>
        <position position="421"/>
    </location>
    <ligand>
        <name>ATP</name>
        <dbReference type="ChEBI" id="CHEBI:30616"/>
    </ligand>
</feature>
<feature type="binding site" evidence="1">
    <location>
        <position position="425"/>
    </location>
    <ligand>
        <name>ADP</name>
        <dbReference type="ChEBI" id="CHEBI:456216"/>
    </ligand>
</feature>
<protein>
    <recommendedName>
        <fullName evidence="1">Glycerol kinase</fullName>
        <ecNumber evidence="1">2.7.1.30</ecNumber>
    </recommendedName>
    <alternativeName>
        <fullName evidence="1">ATP:glycerol 3-phosphotransferase</fullName>
    </alternativeName>
    <alternativeName>
        <fullName evidence="1">Glycerokinase</fullName>
        <shortName evidence="1">GK</shortName>
    </alternativeName>
</protein>
<organism>
    <name type="scientific">Halobacterium salinarum (strain ATCC 700922 / JCM 11081 / NRC-1)</name>
    <name type="common">Halobacterium halobium</name>
    <dbReference type="NCBI Taxonomy" id="64091"/>
    <lineage>
        <taxon>Archaea</taxon>
        <taxon>Methanobacteriati</taxon>
        <taxon>Methanobacteriota</taxon>
        <taxon>Stenosarchaea group</taxon>
        <taxon>Halobacteria</taxon>
        <taxon>Halobacteriales</taxon>
        <taxon>Halobacteriaceae</taxon>
        <taxon>Halobacterium</taxon>
        <taxon>Halobacterium salinarum NRC-34001</taxon>
    </lineage>
</organism>
<gene>
    <name evidence="1" type="primary">glpK</name>
    <name type="ordered locus">VNG_1967G</name>
</gene>
<evidence type="ECO:0000255" key="1">
    <source>
        <dbReference type="HAMAP-Rule" id="MF_00186"/>
    </source>
</evidence>